<proteinExistence type="inferred from homology"/>
<gene>
    <name evidence="1" type="primary">leuC</name>
    <name type="ordered locus">Sde_2086</name>
</gene>
<accession>Q21IY3</accession>
<evidence type="ECO:0000255" key="1">
    <source>
        <dbReference type="HAMAP-Rule" id="MF_01026"/>
    </source>
</evidence>
<evidence type="ECO:0000256" key="2">
    <source>
        <dbReference type="SAM" id="MobiDB-lite"/>
    </source>
</evidence>
<comment type="function">
    <text evidence="1">Catalyzes the isomerization between 2-isopropylmalate and 3-isopropylmalate, via the formation of 2-isopropylmaleate.</text>
</comment>
<comment type="catalytic activity">
    <reaction evidence="1">
        <text>(2R,3S)-3-isopropylmalate = (2S)-2-isopropylmalate</text>
        <dbReference type="Rhea" id="RHEA:32287"/>
        <dbReference type="ChEBI" id="CHEBI:1178"/>
        <dbReference type="ChEBI" id="CHEBI:35121"/>
        <dbReference type="EC" id="4.2.1.33"/>
    </reaction>
</comment>
<comment type="cofactor">
    <cofactor evidence="1">
        <name>[4Fe-4S] cluster</name>
        <dbReference type="ChEBI" id="CHEBI:49883"/>
    </cofactor>
    <text evidence="1">Binds 1 [4Fe-4S] cluster per subunit.</text>
</comment>
<comment type="pathway">
    <text evidence="1">Amino-acid biosynthesis; L-leucine biosynthesis; L-leucine from 3-methyl-2-oxobutanoate: step 2/4.</text>
</comment>
<comment type="subunit">
    <text evidence="1">Heterodimer of LeuC and LeuD.</text>
</comment>
<comment type="similarity">
    <text evidence="1">Belongs to the aconitase/IPM isomerase family. LeuC type 1 subfamily.</text>
</comment>
<organism>
    <name type="scientific">Saccharophagus degradans (strain 2-40 / ATCC 43961 / DSM 17024)</name>
    <dbReference type="NCBI Taxonomy" id="203122"/>
    <lineage>
        <taxon>Bacteria</taxon>
        <taxon>Pseudomonadati</taxon>
        <taxon>Pseudomonadota</taxon>
        <taxon>Gammaproteobacteria</taxon>
        <taxon>Cellvibrionales</taxon>
        <taxon>Cellvibrionaceae</taxon>
        <taxon>Saccharophagus</taxon>
    </lineage>
</organism>
<sequence>MGGKTLYDKLWDDHLVQQRDDGSALLYIDRHIVHEVTSPQAFEGLRLAKRKPWRVDSVVATPDHNVPTTQKERASGVEGIEDPTSRIQVQTLDSNCDELGILEFKINDARQGIVHVVGPETGACLPGMTIVCGDSHTSTNGALGALAMGIGTSEVEHVLATQCLVAKKMKSMLVKVDGKLGAGVTPKDVVLAIIGKIGTAGGTGYAIEFGGEVMRSMSMEGRLTVCNMAIEAGARAGMVAVDDITIDYVKGRSFAPKGEHWEQAVAAWRDLKSDDDAVFDAVVELRGEEILPQVSWGTSPEMVLPVDASIPDPELETDAVKQNGMRRALQYMGLKAGQAIKDIYVDRVFIGSCTNSRIEDIRAAAEVVKGRTKAASVKEAIVVPGSGAVKAQAEAEGLDKIFVEAGLEWREPGCSMCLAMNADKLGDGEHCASTSNRNFEGRQGYGGRTHLVSPAMAAAAAIAGHFVDVREF</sequence>
<protein>
    <recommendedName>
        <fullName evidence="1">3-isopropylmalate dehydratase large subunit</fullName>
        <ecNumber evidence="1">4.2.1.33</ecNumber>
    </recommendedName>
    <alternativeName>
        <fullName evidence="1">Alpha-IPM isomerase</fullName>
        <shortName evidence="1">IPMI</shortName>
    </alternativeName>
    <alternativeName>
        <fullName evidence="1">Isopropylmalate isomerase</fullName>
    </alternativeName>
</protein>
<keyword id="KW-0004">4Fe-4S</keyword>
<keyword id="KW-0028">Amino-acid biosynthesis</keyword>
<keyword id="KW-0100">Branched-chain amino acid biosynthesis</keyword>
<keyword id="KW-0408">Iron</keyword>
<keyword id="KW-0411">Iron-sulfur</keyword>
<keyword id="KW-0432">Leucine biosynthesis</keyword>
<keyword id="KW-0456">Lyase</keyword>
<keyword id="KW-0479">Metal-binding</keyword>
<keyword id="KW-1185">Reference proteome</keyword>
<dbReference type="EC" id="4.2.1.33" evidence="1"/>
<dbReference type="EMBL" id="CP000282">
    <property type="protein sequence ID" value="ABD81346.1"/>
    <property type="molecule type" value="Genomic_DNA"/>
</dbReference>
<dbReference type="RefSeq" id="WP_011468564.1">
    <property type="nucleotide sequence ID" value="NC_007912.1"/>
</dbReference>
<dbReference type="SMR" id="Q21IY3"/>
<dbReference type="STRING" id="203122.Sde_2086"/>
<dbReference type="GeneID" id="98613758"/>
<dbReference type="KEGG" id="sde:Sde_2086"/>
<dbReference type="eggNOG" id="COG0065">
    <property type="taxonomic scope" value="Bacteria"/>
</dbReference>
<dbReference type="HOGENOM" id="CLU_006714_3_4_6"/>
<dbReference type="OrthoDB" id="9802769at2"/>
<dbReference type="UniPathway" id="UPA00048">
    <property type="reaction ID" value="UER00071"/>
</dbReference>
<dbReference type="Proteomes" id="UP000001947">
    <property type="component" value="Chromosome"/>
</dbReference>
<dbReference type="GO" id="GO:0003861">
    <property type="term" value="F:3-isopropylmalate dehydratase activity"/>
    <property type="evidence" value="ECO:0007669"/>
    <property type="project" value="UniProtKB-UniRule"/>
</dbReference>
<dbReference type="GO" id="GO:0051539">
    <property type="term" value="F:4 iron, 4 sulfur cluster binding"/>
    <property type="evidence" value="ECO:0007669"/>
    <property type="project" value="UniProtKB-KW"/>
</dbReference>
<dbReference type="GO" id="GO:0046872">
    <property type="term" value="F:metal ion binding"/>
    <property type="evidence" value="ECO:0007669"/>
    <property type="project" value="UniProtKB-KW"/>
</dbReference>
<dbReference type="GO" id="GO:0009098">
    <property type="term" value="P:L-leucine biosynthetic process"/>
    <property type="evidence" value="ECO:0007669"/>
    <property type="project" value="UniProtKB-UniRule"/>
</dbReference>
<dbReference type="CDD" id="cd01583">
    <property type="entry name" value="IPMI"/>
    <property type="match status" value="1"/>
</dbReference>
<dbReference type="FunFam" id="3.30.499.10:FF:000007">
    <property type="entry name" value="3-isopropylmalate dehydratase large subunit"/>
    <property type="match status" value="1"/>
</dbReference>
<dbReference type="Gene3D" id="3.30.499.10">
    <property type="entry name" value="Aconitase, domain 3"/>
    <property type="match status" value="2"/>
</dbReference>
<dbReference type="HAMAP" id="MF_01026">
    <property type="entry name" value="LeuC_type1"/>
    <property type="match status" value="1"/>
</dbReference>
<dbReference type="InterPro" id="IPR004430">
    <property type="entry name" value="3-IsopropMal_deHydase_lsu"/>
</dbReference>
<dbReference type="InterPro" id="IPR015931">
    <property type="entry name" value="Acnase/IPM_dHydase_lsu_aba_1/3"/>
</dbReference>
<dbReference type="InterPro" id="IPR001030">
    <property type="entry name" value="Acoase/IPM_deHydtase_lsu_aba"/>
</dbReference>
<dbReference type="InterPro" id="IPR018136">
    <property type="entry name" value="Aconitase_4Fe-4S_BS"/>
</dbReference>
<dbReference type="InterPro" id="IPR036008">
    <property type="entry name" value="Aconitase_4Fe-4S_dom"/>
</dbReference>
<dbReference type="InterPro" id="IPR050067">
    <property type="entry name" value="IPM_dehydratase_rel_enz"/>
</dbReference>
<dbReference type="InterPro" id="IPR033941">
    <property type="entry name" value="IPMI_cat"/>
</dbReference>
<dbReference type="NCBIfam" id="TIGR00170">
    <property type="entry name" value="leuC"/>
    <property type="match status" value="1"/>
</dbReference>
<dbReference type="NCBIfam" id="NF004016">
    <property type="entry name" value="PRK05478.1"/>
    <property type="match status" value="1"/>
</dbReference>
<dbReference type="NCBIfam" id="NF009116">
    <property type="entry name" value="PRK12466.1"/>
    <property type="match status" value="1"/>
</dbReference>
<dbReference type="PANTHER" id="PTHR43822:SF9">
    <property type="entry name" value="3-ISOPROPYLMALATE DEHYDRATASE"/>
    <property type="match status" value="1"/>
</dbReference>
<dbReference type="PANTHER" id="PTHR43822">
    <property type="entry name" value="HOMOACONITASE, MITOCHONDRIAL-RELATED"/>
    <property type="match status" value="1"/>
</dbReference>
<dbReference type="Pfam" id="PF00330">
    <property type="entry name" value="Aconitase"/>
    <property type="match status" value="1"/>
</dbReference>
<dbReference type="PRINTS" id="PR00415">
    <property type="entry name" value="ACONITASE"/>
</dbReference>
<dbReference type="SUPFAM" id="SSF53732">
    <property type="entry name" value="Aconitase iron-sulfur domain"/>
    <property type="match status" value="1"/>
</dbReference>
<dbReference type="PROSITE" id="PS00450">
    <property type="entry name" value="ACONITASE_1"/>
    <property type="match status" value="1"/>
</dbReference>
<dbReference type="PROSITE" id="PS01244">
    <property type="entry name" value="ACONITASE_2"/>
    <property type="match status" value="1"/>
</dbReference>
<name>LEUC_SACD2</name>
<feature type="chain" id="PRO_1000063600" description="3-isopropylmalate dehydratase large subunit">
    <location>
        <begin position="1"/>
        <end position="472"/>
    </location>
</feature>
<feature type="region of interest" description="Disordered" evidence="2">
    <location>
        <begin position="61"/>
        <end position="80"/>
    </location>
</feature>
<feature type="binding site" evidence="1">
    <location>
        <position position="353"/>
    </location>
    <ligand>
        <name>[4Fe-4S] cluster</name>
        <dbReference type="ChEBI" id="CHEBI:49883"/>
    </ligand>
</feature>
<feature type="binding site" evidence="1">
    <location>
        <position position="414"/>
    </location>
    <ligand>
        <name>[4Fe-4S] cluster</name>
        <dbReference type="ChEBI" id="CHEBI:49883"/>
    </ligand>
</feature>
<feature type="binding site" evidence="1">
    <location>
        <position position="417"/>
    </location>
    <ligand>
        <name>[4Fe-4S] cluster</name>
        <dbReference type="ChEBI" id="CHEBI:49883"/>
    </ligand>
</feature>
<reference key="1">
    <citation type="journal article" date="2008" name="PLoS Genet.">
        <title>Complete genome sequence of the complex carbohydrate-degrading marine bacterium, Saccharophagus degradans strain 2-40 T.</title>
        <authorList>
            <person name="Weiner R.M."/>
            <person name="Taylor L.E. II"/>
            <person name="Henrissat B."/>
            <person name="Hauser L."/>
            <person name="Land M."/>
            <person name="Coutinho P.M."/>
            <person name="Rancurel C."/>
            <person name="Saunders E.H."/>
            <person name="Longmire A.G."/>
            <person name="Zhang H."/>
            <person name="Bayer E.A."/>
            <person name="Gilbert H.J."/>
            <person name="Larimer F."/>
            <person name="Zhulin I.B."/>
            <person name="Ekborg N.A."/>
            <person name="Lamed R."/>
            <person name="Richardson P.M."/>
            <person name="Borovok I."/>
            <person name="Hutcheson S."/>
        </authorList>
    </citation>
    <scope>NUCLEOTIDE SEQUENCE [LARGE SCALE GENOMIC DNA]</scope>
    <source>
        <strain>2-40 / ATCC 43961 / DSM 17024</strain>
    </source>
</reference>